<name>RL5_BACC4</name>
<keyword id="KW-0687">Ribonucleoprotein</keyword>
<keyword id="KW-0689">Ribosomal protein</keyword>
<keyword id="KW-0694">RNA-binding</keyword>
<keyword id="KW-0699">rRNA-binding</keyword>
<keyword id="KW-0820">tRNA-binding</keyword>
<sequence length="179" mass="20165">MNRLKEKFQKEITPALVSKFNYKSVMQVPKIEKIVINTGVGDAVSNSKALDNAVEELTQITGQKPVVTRAKKSIAGFRLREGMPIGAKVTLRGEQMYEFFDKLVSVSLPRVRDFRGVSKKSFDGRGNYTLGVKEQLIFPEIDYDKVSKVRGMDIVIVTTAKTDEEARELLTQFGMPFQK</sequence>
<proteinExistence type="inferred from homology"/>
<organism>
    <name type="scientific">Bacillus cereus (strain B4264)</name>
    <dbReference type="NCBI Taxonomy" id="405532"/>
    <lineage>
        <taxon>Bacteria</taxon>
        <taxon>Bacillati</taxon>
        <taxon>Bacillota</taxon>
        <taxon>Bacilli</taxon>
        <taxon>Bacillales</taxon>
        <taxon>Bacillaceae</taxon>
        <taxon>Bacillus</taxon>
        <taxon>Bacillus cereus group</taxon>
    </lineage>
</organism>
<gene>
    <name evidence="1" type="primary">rplE</name>
    <name type="ordered locus">BCB4264_A0143</name>
</gene>
<dbReference type="EMBL" id="CP001176">
    <property type="protein sequence ID" value="ACK58793.1"/>
    <property type="molecule type" value="Genomic_DNA"/>
</dbReference>
<dbReference type="RefSeq" id="WP_001080831.1">
    <property type="nucleotide sequence ID" value="NZ_VEHB01000017.1"/>
</dbReference>
<dbReference type="SMR" id="B7HJ60"/>
<dbReference type="GeneID" id="93010931"/>
<dbReference type="KEGG" id="bcb:BCB4264_A0143"/>
<dbReference type="HOGENOM" id="CLU_061015_2_1_9"/>
<dbReference type="Proteomes" id="UP000007096">
    <property type="component" value="Chromosome"/>
</dbReference>
<dbReference type="GO" id="GO:1990904">
    <property type="term" value="C:ribonucleoprotein complex"/>
    <property type="evidence" value="ECO:0007669"/>
    <property type="project" value="UniProtKB-KW"/>
</dbReference>
<dbReference type="GO" id="GO:0005840">
    <property type="term" value="C:ribosome"/>
    <property type="evidence" value="ECO:0007669"/>
    <property type="project" value="UniProtKB-KW"/>
</dbReference>
<dbReference type="GO" id="GO:0019843">
    <property type="term" value="F:rRNA binding"/>
    <property type="evidence" value="ECO:0007669"/>
    <property type="project" value="UniProtKB-UniRule"/>
</dbReference>
<dbReference type="GO" id="GO:0003735">
    <property type="term" value="F:structural constituent of ribosome"/>
    <property type="evidence" value="ECO:0007669"/>
    <property type="project" value="InterPro"/>
</dbReference>
<dbReference type="GO" id="GO:0000049">
    <property type="term" value="F:tRNA binding"/>
    <property type="evidence" value="ECO:0007669"/>
    <property type="project" value="UniProtKB-UniRule"/>
</dbReference>
<dbReference type="GO" id="GO:0006412">
    <property type="term" value="P:translation"/>
    <property type="evidence" value="ECO:0007669"/>
    <property type="project" value="UniProtKB-UniRule"/>
</dbReference>
<dbReference type="FunFam" id="3.30.1440.10:FF:000001">
    <property type="entry name" value="50S ribosomal protein L5"/>
    <property type="match status" value="1"/>
</dbReference>
<dbReference type="Gene3D" id="3.30.1440.10">
    <property type="match status" value="1"/>
</dbReference>
<dbReference type="HAMAP" id="MF_01333_B">
    <property type="entry name" value="Ribosomal_uL5_B"/>
    <property type="match status" value="1"/>
</dbReference>
<dbReference type="InterPro" id="IPR002132">
    <property type="entry name" value="Ribosomal_uL5"/>
</dbReference>
<dbReference type="InterPro" id="IPR020930">
    <property type="entry name" value="Ribosomal_uL5_bac-type"/>
</dbReference>
<dbReference type="InterPro" id="IPR031309">
    <property type="entry name" value="Ribosomal_uL5_C"/>
</dbReference>
<dbReference type="InterPro" id="IPR020929">
    <property type="entry name" value="Ribosomal_uL5_CS"/>
</dbReference>
<dbReference type="InterPro" id="IPR022803">
    <property type="entry name" value="Ribosomal_uL5_dom_sf"/>
</dbReference>
<dbReference type="InterPro" id="IPR031310">
    <property type="entry name" value="Ribosomal_uL5_N"/>
</dbReference>
<dbReference type="NCBIfam" id="NF000585">
    <property type="entry name" value="PRK00010.1"/>
    <property type="match status" value="1"/>
</dbReference>
<dbReference type="PANTHER" id="PTHR11994">
    <property type="entry name" value="60S RIBOSOMAL PROTEIN L11-RELATED"/>
    <property type="match status" value="1"/>
</dbReference>
<dbReference type="Pfam" id="PF00281">
    <property type="entry name" value="Ribosomal_L5"/>
    <property type="match status" value="1"/>
</dbReference>
<dbReference type="Pfam" id="PF00673">
    <property type="entry name" value="Ribosomal_L5_C"/>
    <property type="match status" value="1"/>
</dbReference>
<dbReference type="PIRSF" id="PIRSF002161">
    <property type="entry name" value="Ribosomal_L5"/>
    <property type="match status" value="1"/>
</dbReference>
<dbReference type="SUPFAM" id="SSF55282">
    <property type="entry name" value="RL5-like"/>
    <property type="match status" value="1"/>
</dbReference>
<dbReference type="PROSITE" id="PS00358">
    <property type="entry name" value="RIBOSOMAL_L5"/>
    <property type="match status" value="1"/>
</dbReference>
<reference key="1">
    <citation type="submission" date="2008-10" db="EMBL/GenBank/DDBJ databases">
        <title>Genome sequence of Bacillus cereus B4264.</title>
        <authorList>
            <person name="Dodson R.J."/>
            <person name="Durkin A.S."/>
            <person name="Rosovitz M.J."/>
            <person name="Rasko D.A."/>
            <person name="Hoffmaster A."/>
            <person name="Ravel J."/>
            <person name="Sutton G."/>
        </authorList>
    </citation>
    <scope>NUCLEOTIDE SEQUENCE [LARGE SCALE GENOMIC DNA]</scope>
    <source>
        <strain>B4264</strain>
    </source>
</reference>
<protein>
    <recommendedName>
        <fullName evidence="1">Large ribosomal subunit protein uL5</fullName>
    </recommendedName>
    <alternativeName>
        <fullName evidence="2">50S ribosomal protein L5</fullName>
    </alternativeName>
</protein>
<evidence type="ECO:0000255" key="1">
    <source>
        <dbReference type="HAMAP-Rule" id="MF_01333"/>
    </source>
</evidence>
<evidence type="ECO:0000305" key="2"/>
<accession>B7HJ60</accession>
<feature type="chain" id="PRO_1000142353" description="Large ribosomal subunit protein uL5">
    <location>
        <begin position="1"/>
        <end position="179"/>
    </location>
</feature>
<comment type="function">
    <text evidence="1">This is one of the proteins that bind and probably mediate the attachment of the 5S RNA into the large ribosomal subunit, where it forms part of the central protuberance. In the 70S ribosome it contacts protein S13 of the 30S subunit (bridge B1b), connecting the 2 subunits; this bridge is implicated in subunit movement. Contacts the P site tRNA; the 5S rRNA and some of its associated proteins might help stabilize positioning of ribosome-bound tRNAs.</text>
</comment>
<comment type="subunit">
    <text evidence="1">Part of the 50S ribosomal subunit; part of the 5S rRNA/L5/L18/L25 subcomplex. Contacts the 5S rRNA and the P site tRNA. Forms a bridge to the 30S subunit in the 70S ribosome.</text>
</comment>
<comment type="similarity">
    <text evidence="1">Belongs to the universal ribosomal protein uL5 family.</text>
</comment>